<keyword id="KW-0963">Cytoplasm</keyword>
<keyword id="KW-0255">Endonuclease</keyword>
<keyword id="KW-0378">Hydrolase</keyword>
<keyword id="KW-0460">Magnesium</keyword>
<keyword id="KW-0479">Metal-binding</keyword>
<keyword id="KW-0540">Nuclease</keyword>
<organism>
    <name type="scientific">Helicobacter pylori (strain J99 / ATCC 700824)</name>
    <name type="common">Campylobacter pylori J99</name>
    <dbReference type="NCBI Taxonomy" id="85963"/>
    <lineage>
        <taxon>Bacteria</taxon>
        <taxon>Pseudomonadati</taxon>
        <taxon>Campylobacterota</taxon>
        <taxon>Epsilonproteobacteria</taxon>
        <taxon>Campylobacterales</taxon>
        <taxon>Helicobacteraceae</taxon>
        <taxon>Helicobacter</taxon>
    </lineage>
</organism>
<reference key="1">
    <citation type="journal article" date="1999" name="Nature">
        <title>Genomic sequence comparison of two unrelated isolates of the human gastric pathogen Helicobacter pylori.</title>
        <authorList>
            <person name="Alm R.A."/>
            <person name="Ling L.-S.L."/>
            <person name="Moir D.T."/>
            <person name="King B.L."/>
            <person name="Brown E.D."/>
            <person name="Doig P.C."/>
            <person name="Smith D.R."/>
            <person name="Noonan B."/>
            <person name="Guild B.C."/>
            <person name="deJonge B.L."/>
            <person name="Carmel G."/>
            <person name="Tummino P.J."/>
            <person name="Caruso A."/>
            <person name="Uria-Nickelsen M."/>
            <person name="Mills D.M."/>
            <person name="Ives C."/>
            <person name="Gibson R."/>
            <person name="Merberg D."/>
            <person name="Mills S.D."/>
            <person name="Jiang Q."/>
            <person name="Taylor D.E."/>
            <person name="Vovis G.F."/>
            <person name="Trust T.J."/>
        </authorList>
    </citation>
    <scope>NUCLEOTIDE SEQUENCE [LARGE SCALE GENOMIC DNA]</scope>
    <source>
        <strain>J99 / ATCC 700824</strain>
    </source>
</reference>
<accession>Q9ZLH3</accession>
<name>RNH_HELPJ</name>
<gene>
    <name type="primary">rnhA</name>
    <name type="ordered locus">jhp_0606</name>
</gene>
<feature type="chain" id="PRO_0000195380" description="Ribonuclease HI">
    <location>
        <begin position="1"/>
        <end position="143"/>
    </location>
</feature>
<feature type="domain" description="RNase H type-1" evidence="2">
    <location>
        <begin position="1"/>
        <end position="136"/>
    </location>
</feature>
<feature type="binding site" evidence="1">
    <location>
        <position position="9"/>
    </location>
    <ligand>
        <name>Mg(2+)</name>
        <dbReference type="ChEBI" id="CHEBI:18420"/>
        <label>1</label>
    </ligand>
</feature>
<feature type="binding site" evidence="1">
    <location>
        <position position="9"/>
    </location>
    <ligand>
        <name>Mg(2+)</name>
        <dbReference type="ChEBI" id="CHEBI:18420"/>
        <label>2</label>
    </ligand>
</feature>
<feature type="binding site" evidence="1">
    <location>
        <position position="47"/>
    </location>
    <ligand>
        <name>Mg(2+)</name>
        <dbReference type="ChEBI" id="CHEBI:18420"/>
        <label>1</label>
    </ligand>
</feature>
<feature type="binding site" evidence="1">
    <location>
        <position position="69"/>
    </location>
    <ligand>
        <name>Mg(2+)</name>
        <dbReference type="ChEBI" id="CHEBI:18420"/>
        <label>1</label>
    </ligand>
</feature>
<feature type="binding site" evidence="1">
    <location>
        <position position="128"/>
    </location>
    <ligand>
        <name>Mg(2+)</name>
        <dbReference type="ChEBI" id="CHEBI:18420"/>
        <label>2</label>
    </ligand>
</feature>
<proteinExistence type="inferred from homology"/>
<sequence>MQEIEIFCDGSSLGNPGPGGYAAILRYKDKEKTISGGENFTTNNRMELRALNEALKILKRPCHITLYSDSQYVCQAINVWLVNWQKKNFAKVKNVDLWKEFVKVSKGHSIVAVWIKGHNGHAENERCNSLAKLEAQKRVKTTT</sequence>
<evidence type="ECO:0000250" key="1"/>
<evidence type="ECO:0000255" key="2">
    <source>
        <dbReference type="PROSITE-ProRule" id="PRU00408"/>
    </source>
</evidence>
<evidence type="ECO:0000305" key="3"/>
<dbReference type="EC" id="3.1.26.4"/>
<dbReference type="EMBL" id="AE001439">
    <property type="protein sequence ID" value="AAD06187.1"/>
    <property type="molecule type" value="Genomic_DNA"/>
</dbReference>
<dbReference type="PIR" id="D71911">
    <property type="entry name" value="D71911"/>
</dbReference>
<dbReference type="SMR" id="Q9ZLH3"/>
<dbReference type="KEGG" id="hpj:jhp_0606"/>
<dbReference type="PATRIC" id="fig|85963.30.peg.379"/>
<dbReference type="eggNOG" id="COG0328">
    <property type="taxonomic scope" value="Bacteria"/>
</dbReference>
<dbReference type="Proteomes" id="UP000000804">
    <property type="component" value="Chromosome"/>
</dbReference>
<dbReference type="GO" id="GO:0005737">
    <property type="term" value="C:cytoplasm"/>
    <property type="evidence" value="ECO:0007669"/>
    <property type="project" value="UniProtKB-SubCell"/>
</dbReference>
<dbReference type="GO" id="GO:0000287">
    <property type="term" value="F:magnesium ion binding"/>
    <property type="evidence" value="ECO:0007669"/>
    <property type="project" value="UniProtKB-UniRule"/>
</dbReference>
<dbReference type="GO" id="GO:0003676">
    <property type="term" value="F:nucleic acid binding"/>
    <property type="evidence" value="ECO:0007669"/>
    <property type="project" value="InterPro"/>
</dbReference>
<dbReference type="GO" id="GO:0004523">
    <property type="term" value="F:RNA-DNA hybrid ribonuclease activity"/>
    <property type="evidence" value="ECO:0007669"/>
    <property type="project" value="UniProtKB-UniRule"/>
</dbReference>
<dbReference type="GO" id="GO:0043137">
    <property type="term" value="P:DNA replication, removal of RNA primer"/>
    <property type="evidence" value="ECO:0007669"/>
    <property type="project" value="TreeGrafter"/>
</dbReference>
<dbReference type="CDD" id="cd09278">
    <property type="entry name" value="RNase_HI_prokaryote_like"/>
    <property type="match status" value="1"/>
</dbReference>
<dbReference type="FunFam" id="3.30.420.10:FF:000089">
    <property type="entry name" value="Ribonuclease H"/>
    <property type="match status" value="1"/>
</dbReference>
<dbReference type="Gene3D" id="3.30.420.10">
    <property type="entry name" value="Ribonuclease H-like superfamily/Ribonuclease H"/>
    <property type="match status" value="1"/>
</dbReference>
<dbReference type="HAMAP" id="MF_00042">
    <property type="entry name" value="RNase_H"/>
    <property type="match status" value="1"/>
</dbReference>
<dbReference type="InterPro" id="IPR050092">
    <property type="entry name" value="RNase_H"/>
</dbReference>
<dbReference type="InterPro" id="IPR012337">
    <property type="entry name" value="RNaseH-like_sf"/>
</dbReference>
<dbReference type="InterPro" id="IPR002156">
    <property type="entry name" value="RNaseH_domain"/>
</dbReference>
<dbReference type="InterPro" id="IPR036397">
    <property type="entry name" value="RNaseH_sf"/>
</dbReference>
<dbReference type="InterPro" id="IPR022892">
    <property type="entry name" value="RNaseHI"/>
</dbReference>
<dbReference type="NCBIfam" id="NF001236">
    <property type="entry name" value="PRK00203.1"/>
    <property type="match status" value="1"/>
</dbReference>
<dbReference type="PANTHER" id="PTHR10642">
    <property type="entry name" value="RIBONUCLEASE H1"/>
    <property type="match status" value="1"/>
</dbReference>
<dbReference type="PANTHER" id="PTHR10642:SF26">
    <property type="entry name" value="RIBONUCLEASE H1"/>
    <property type="match status" value="1"/>
</dbReference>
<dbReference type="Pfam" id="PF00075">
    <property type="entry name" value="RNase_H"/>
    <property type="match status" value="1"/>
</dbReference>
<dbReference type="SUPFAM" id="SSF53098">
    <property type="entry name" value="Ribonuclease H-like"/>
    <property type="match status" value="1"/>
</dbReference>
<dbReference type="PROSITE" id="PS50879">
    <property type="entry name" value="RNASE_H_1"/>
    <property type="match status" value="1"/>
</dbReference>
<comment type="function">
    <text evidence="1">Endonuclease that specifically degrades the RNA of RNA-DNA hybrids.</text>
</comment>
<comment type="catalytic activity">
    <reaction>
        <text>Endonucleolytic cleavage to 5'-phosphomonoester.</text>
        <dbReference type="EC" id="3.1.26.4"/>
    </reaction>
</comment>
<comment type="cofactor">
    <cofactor evidence="1">
        <name>Mg(2+)</name>
        <dbReference type="ChEBI" id="CHEBI:18420"/>
    </cofactor>
    <text evidence="1">Binds 1 Mg(2+) ion per subunit. May bind a second metal ion at a regulatory site, or after substrate binding.</text>
</comment>
<comment type="subunit">
    <text evidence="1">Monomer.</text>
</comment>
<comment type="subcellular location">
    <subcellularLocation>
        <location evidence="3">Cytoplasm</location>
    </subcellularLocation>
</comment>
<comment type="similarity">
    <text evidence="3">Belongs to the RNase H family.</text>
</comment>
<protein>
    <recommendedName>
        <fullName>Ribonuclease HI</fullName>
        <shortName>RNase HI</shortName>
        <ecNumber>3.1.26.4</ecNumber>
    </recommendedName>
</protein>